<gene>
    <name evidence="4" type="ORF">ADK75_29445</name>
</gene>
<comment type="function">
    <text evidence="1">Catalyzes the reversible oxidative deaminations of a broad range of amines, amino alcohols and amino acids. Catalyzes the reversible dehydrogenation of serinol in the presence of NAD(+) to give dihydroxyacetone, ammonium ion and NADH, while NADP(+) shows a slight activity. Is also able to produce 2-amino-1-propanol and aspartate by the reductive amination of the corresponding keto alcohol (hydroxyacetone) and keto acid (oxaloacetate) in the presence of ammonium ions and NADH, and that of acetophenone from phenylethylamine by the oxidative deamination in the presence of NAD(+).</text>
</comment>
<comment type="catalytic activity">
    <reaction evidence="1">
        <text>a secondary alkyl amine + NAD(+) + H2O = a ketone + NH4(+) + NADH + H(+)</text>
        <dbReference type="Rhea" id="RHEA:74175"/>
        <dbReference type="ChEBI" id="CHEBI:15377"/>
        <dbReference type="ChEBI" id="CHEBI:15378"/>
        <dbReference type="ChEBI" id="CHEBI:17087"/>
        <dbReference type="ChEBI" id="CHEBI:28938"/>
        <dbReference type="ChEBI" id="CHEBI:57540"/>
        <dbReference type="ChEBI" id="CHEBI:57945"/>
        <dbReference type="ChEBI" id="CHEBI:193112"/>
        <dbReference type="EC" id="1.4.1.28"/>
    </reaction>
</comment>
<comment type="catalytic activity">
    <reaction evidence="1">
        <text>a secondary alkyl amine + NADP(+) + H2O = a ketone + NH4(+) + NADPH + H(+)</text>
        <dbReference type="Rhea" id="RHEA:74179"/>
        <dbReference type="ChEBI" id="CHEBI:15377"/>
        <dbReference type="ChEBI" id="CHEBI:15378"/>
        <dbReference type="ChEBI" id="CHEBI:17087"/>
        <dbReference type="ChEBI" id="CHEBI:28938"/>
        <dbReference type="ChEBI" id="CHEBI:57783"/>
        <dbReference type="ChEBI" id="CHEBI:58349"/>
        <dbReference type="ChEBI" id="CHEBI:193112"/>
        <dbReference type="EC" id="1.4.1.28"/>
    </reaction>
</comment>
<comment type="catalytic activity">
    <reaction evidence="1">
        <text>serinol + NAD(+) + H2O = dihydroxyacetone + NH4(+) + NADH + H(+)</text>
        <dbReference type="Rhea" id="RHEA:75915"/>
        <dbReference type="ChEBI" id="CHEBI:15377"/>
        <dbReference type="ChEBI" id="CHEBI:15378"/>
        <dbReference type="ChEBI" id="CHEBI:16016"/>
        <dbReference type="ChEBI" id="CHEBI:28938"/>
        <dbReference type="ChEBI" id="CHEBI:57540"/>
        <dbReference type="ChEBI" id="CHEBI:57945"/>
        <dbReference type="ChEBI" id="CHEBI:194490"/>
    </reaction>
</comment>
<comment type="catalytic activity">
    <reaction evidence="1">
        <text>serinol + NADP(+) + H2O = dihydroxyacetone + NH4(+) + NADPH + H(+)</text>
        <dbReference type="Rhea" id="RHEA:75919"/>
        <dbReference type="ChEBI" id="CHEBI:15377"/>
        <dbReference type="ChEBI" id="CHEBI:15378"/>
        <dbReference type="ChEBI" id="CHEBI:16016"/>
        <dbReference type="ChEBI" id="CHEBI:28938"/>
        <dbReference type="ChEBI" id="CHEBI:57783"/>
        <dbReference type="ChEBI" id="CHEBI:58349"/>
        <dbReference type="ChEBI" id="CHEBI:194490"/>
    </reaction>
</comment>
<comment type="catalytic activity">
    <reaction evidence="1">
        <text>2-aminopropan-1-ol + NAD(+) + H2O = hydroxyacetone + NH4(+) + NADH + H(+)</text>
        <dbReference type="Rhea" id="RHEA:76795"/>
        <dbReference type="ChEBI" id="CHEBI:15377"/>
        <dbReference type="ChEBI" id="CHEBI:15378"/>
        <dbReference type="ChEBI" id="CHEBI:27957"/>
        <dbReference type="ChEBI" id="CHEBI:28938"/>
        <dbReference type="ChEBI" id="CHEBI:57540"/>
        <dbReference type="ChEBI" id="CHEBI:57945"/>
        <dbReference type="ChEBI" id="CHEBI:195439"/>
    </reaction>
</comment>
<comment type="catalytic activity">
    <reaction evidence="1">
        <text>(R)-1-phenylethylamine + NAD(+) + H2O = acetophenone + NH4(+) + NADH + H(+)</text>
        <dbReference type="Rhea" id="RHEA:76867"/>
        <dbReference type="ChEBI" id="CHEBI:15377"/>
        <dbReference type="ChEBI" id="CHEBI:15378"/>
        <dbReference type="ChEBI" id="CHEBI:27632"/>
        <dbReference type="ChEBI" id="CHEBI:28938"/>
        <dbReference type="ChEBI" id="CHEBI:57540"/>
        <dbReference type="ChEBI" id="CHEBI:57945"/>
        <dbReference type="ChEBI" id="CHEBI:141112"/>
    </reaction>
</comment>
<comment type="catalytic activity">
    <reaction evidence="1">
        <text>(S)-1-phenylethylamine + NAD(+) + H2O = acetophenone + NH4(+) + NADH + H(+)</text>
        <dbReference type="Rhea" id="RHEA:76871"/>
        <dbReference type="ChEBI" id="CHEBI:15377"/>
        <dbReference type="ChEBI" id="CHEBI:15378"/>
        <dbReference type="ChEBI" id="CHEBI:27632"/>
        <dbReference type="ChEBI" id="CHEBI:28938"/>
        <dbReference type="ChEBI" id="CHEBI:57540"/>
        <dbReference type="ChEBI" id="CHEBI:57945"/>
        <dbReference type="ChEBI" id="CHEBI:141108"/>
    </reaction>
</comment>
<comment type="catalytic activity">
    <reaction evidence="1">
        <text>(2S)-2-aminobutan-1-ol + NAD(+) + H2O = 1-hydroxy-2-butanone + NH4(+) + NADH + H(+)</text>
        <dbReference type="Rhea" id="RHEA:76799"/>
        <dbReference type="ChEBI" id="CHEBI:15377"/>
        <dbReference type="ChEBI" id="CHEBI:15378"/>
        <dbReference type="ChEBI" id="CHEBI:28938"/>
        <dbReference type="ChEBI" id="CHEBI:57540"/>
        <dbReference type="ChEBI" id="CHEBI:57945"/>
        <dbReference type="ChEBI" id="CHEBI:88390"/>
        <dbReference type="ChEBI" id="CHEBI:195442"/>
    </reaction>
</comment>
<comment type="catalytic activity">
    <reaction evidence="1">
        <text>(2S)-2-amino-3-methylbutan-1-ol + NAD(+) + H2O = 1-hydroxy-3-methylbutan-2-one + NH4(+) + NADH + H(+)</text>
        <dbReference type="Rhea" id="RHEA:77011"/>
        <dbReference type="ChEBI" id="CHEBI:15377"/>
        <dbReference type="ChEBI" id="CHEBI:15378"/>
        <dbReference type="ChEBI" id="CHEBI:28938"/>
        <dbReference type="ChEBI" id="CHEBI:57540"/>
        <dbReference type="ChEBI" id="CHEBI:57945"/>
        <dbReference type="ChEBI" id="CHEBI:195496"/>
        <dbReference type="ChEBI" id="CHEBI:195497"/>
    </reaction>
</comment>
<comment type="catalytic activity">
    <reaction evidence="1">
        <text>2-aminopentan-1-ol + NAD(+) + H2O = 1-hydroxypentan-2-one + NH4(+) + NADH + H(+)</text>
        <dbReference type="Rhea" id="RHEA:76803"/>
        <dbReference type="ChEBI" id="CHEBI:15377"/>
        <dbReference type="ChEBI" id="CHEBI:15378"/>
        <dbReference type="ChEBI" id="CHEBI:28938"/>
        <dbReference type="ChEBI" id="CHEBI:57540"/>
        <dbReference type="ChEBI" id="CHEBI:57945"/>
        <dbReference type="ChEBI" id="CHEBI:89466"/>
        <dbReference type="ChEBI" id="CHEBI:195443"/>
    </reaction>
</comment>
<comment type="catalytic activity">
    <reaction evidence="1">
        <text>(S)-leucinol + NAD(+) + H2O = 1-hydroxy-4-methylpentan-2-one + NH4(+) + NADH + H(+)</text>
        <dbReference type="Rhea" id="RHEA:77015"/>
        <dbReference type="ChEBI" id="CHEBI:15377"/>
        <dbReference type="ChEBI" id="CHEBI:15378"/>
        <dbReference type="ChEBI" id="CHEBI:28938"/>
        <dbReference type="ChEBI" id="CHEBI:57540"/>
        <dbReference type="ChEBI" id="CHEBI:57945"/>
        <dbReference type="ChEBI" id="CHEBI:195498"/>
        <dbReference type="ChEBI" id="CHEBI:195499"/>
    </reaction>
</comment>
<comment type="catalytic activity">
    <reaction evidence="1">
        <text>(S)-isoleucinol + NAD(+) + H2O = (3S)-1-hydroxy-3-methylpentan-2-one + NH4(+) + NADH + H(+)</text>
        <dbReference type="Rhea" id="RHEA:76807"/>
        <dbReference type="ChEBI" id="CHEBI:15377"/>
        <dbReference type="ChEBI" id="CHEBI:15378"/>
        <dbReference type="ChEBI" id="CHEBI:28938"/>
        <dbReference type="ChEBI" id="CHEBI:57540"/>
        <dbReference type="ChEBI" id="CHEBI:57945"/>
        <dbReference type="ChEBI" id="CHEBI:195448"/>
        <dbReference type="ChEBI" id="CHEBI:195449"/>
    </reaction>
</comment>
<comment type="catalytic activity">
    <reaction evidence="1">
        <text>(S)-methioninol + NAD(+) + H2O = 1-hydroxy-4-(methythio)butan-2-one + NH4(+) + NADH + H(+)</text>
        <dbReference type="Rhea" id="RHEA:76811"/>
        <dbReference type="ChEBI" id="CHEBI:15377"/>
        <dbReference type="ChEBI" id="CHEBI:15378"/>
        <dbReference type="ChEBI" id="CHEBI:28938"/>
        <dbReference type="ChEBI" id="CHEBI:57540"/>
        <dbReference type="ChEBI" id="CHEBI:57945"/>
        <dbReference type="ChEBI" id="CHEBI:195450"/>
        <dbReference type="ChEBI" id="CHEBI:195451"/>
    </reaction>
</comment>
<comment type="catalytic activity">
    <reaction evidence="1">
        <text>2-aminocyclohexanol + NAD(+) + H2O = 2-hydroxycyclohexan-1-one + NH4(+) + NADH + H(+)</text>
        <dbReference type="Rhea" id="RHEA:77019"/>
        <dbReference type="ChEBI" id="CHEBI:15377"/>
        <dbReference type="ChEBI" id="CHEBI:15378"/>
        <dbReference type="ChEBI" id="CHEBI:17878"/>
        <dbReference type="ChEBI" id="CHEBI:28938"/>
        <dbReference type="ChEBI" id="CHEBI:57540"/>
        <dbReference type="ChEBI" id="CHEBI:57945"/>
        <dbReference type="ChEBI" id="CHEBI:195500"/>
    </reaction>
</comment>
<comment type="catalytic activity">
    <reaction evidence="1">
        <text>L-alanine + NAD(+) + H2O = pyruvate + NH4(+) + NADH + H(+)</text>
        <dbReference type="Rhea" id="RHEA:18405"/>
        <dbReference type="ChEBI" id="CHEBI:15361"/>
        <dbReference type="ChEBI" id="CHEBI:15377"/>
        <dbReference type="ChEBI" id="CHEBI:15378"/>
        <dbReference type="ChEBI" id="CHEBI:28938"/>
        <dbReference type="ChEBI" id="CHEBI:57540"/>
        <dbReference type="ChEBI" id="CHEBI:57945"/>
        <dbReference type="ChEBI" id="CHEBI:57972"/>
    </reaction>
</comment>
<comment type="catalytic activity">
    <reaction evidence="1">
        <text>D-alanine + NAD(+) + H2O = pyruvate + NH4(+) + NADH + H(+)</text>
        <dbReference type="Rhea" id="RHEA:76815"/>
        <dbReference type="ChEBI" id="CHEBI:15361"/>
        <dbReference type="ChEBI" id="CHEBI:15377"/>
        <dbReference type="ChEBI" id="CHEBI:15378"/>
        <dbReference type="ChEBI" id="CHEBI:28938"/>
        <dbReference type="ChEBI" id="CHEBI:57416"/>
        <dbReference type="ChEBI" id="CHEBI:57540"/>
        <dbReference type="ChEBI" id="CHEBI:57945"/>
    </reaction>
</comment>
<comment type="catalytic activity">
    <reaction evidence="1">
        <text>L-aspartate + NAD(+) + H2O = oxaloacetate + NH4(+) + NADH + H(+)</text>
        <dbReference type="Rhea" id="RHEA:11788"/>
        <dbReference type="ChEBI" id="CHEBI:15377"/>
        <dbReference type="ChEBI" id="CHEBI:15378"/>
        <dbReference type="ChEBI" id="CHEBI:16452"/>
        <dbReference type="ChEBI" id="CHEBI:28938"/>
        <dbReference type="ChEBI" id="CHEBI:29991"/>
        <dbReference type="ChEBI" id="CHEBI:57540"/>
        <dbReference type="ChEBI" id="CHEBI:57945"/>
    </reaction>
</comment>
<comment type="catalytic activity">
    <reaction evidence="1">
        <text>D-aspartate + NAD(+) + H2O = oxaloacetate + NH4(+) + NADH + H(+)</text>
        <dbReference type="Rhea" id="RHEA:76819"/>
        <dbReference type="ChEBI" id="CHEBI:15377"/>
        <dbReference type="ChEBI" id="CHEBI:15378"/>
        <dbReference type="ChEBI" id="CHEBI:16452"/>
        <dbReference type="ChEBI" id="CHEBI:28938"/>
        <dbReference type="ChEBI" id="CHEBI:29990"/>
        <dbReference type="ChEBI" id="CHEBI:57540"/>
        <dbReference type="ChEBI" id="CHEBI:57945"/>
    </reaction>
</comment>
<comment type="catalytic activity">
    <reaction evidence="1">
        <text>L-glutamate + NAD(+) + H2O = 2-oxoglutarate + NH4(+) + NADH + H(+)</text>
        <dbReference type="Rhea" id="RHEA:15133"/>
        <dbReference type="ChEBI" id="CHEBI:15377"/>
        <dbReference type="ChEBI" id="CHEBI:15378"/>
        <dbReference type="ChEBI" id="CHEBI:16810"/>
        <dbReference type="ChEBI" id="CHEBI:28938"/>
        <dbReference type="ChEBI" id="CHEBI:29985"/>
        <dbReference type="ChEBI" id="CHEBI:57540"/>
        <dbReference type="ChEBI" id="CHEBI:57945"/>
    </reaction>
</comment>
<comment type="catalytic activity">
    <reaction evidence="1">
        <text>D-glutamate + NAD(+) + H2O = 2-oxoglutarate + NH4(+) + NADH + H(+)</text>
        <dbReference type="Rhea" id="RHEA:77023"/>
        <dbReference type="ChEBI" id="CHEBI:15377"/>
        <dbReference type="ChEBI" id="CHEBI:15378"/>
        <dbReference type="ChEBI" id="CHEBI:16810"/>
        <dbReference type="ChEBI" id="CHEBI:28938"/>
        <dbReference type="ChEBI" id="CHEBI:29986"/>
        <dbReference type="ChEBI" id="CHEBI:57540"/>
        <dbReference type="ChEBI" id="CHEBI:57945"/>
    </reaction>
</comment>
<comment type="catalytic activity">
    <reaction evidence="1">
        <text>L-serine + NAD(+) + H2O = 3-hydroxypyruvate + NH4(+) + NADH + H(+)</text>
        <dbReference type="Rhea" id="RHEA:20884"/>
        <dbReference type="ChEBI" id="CHEBI:15377"/>
        <dbReference type="ChEBI" id="CHEBI:15378"/>
        <dbReference type="ChEBI" id="CHEBI:17180"/>
        <dbReference type="ChEBI" id="CHEBI:28938"/>
        <dbReference type="ChEBI" id="CHEBI:33384"/>
        <dbReference type="ChEBI" id="CHEBI:57540"/>
        <dbReference type="ChEBI" id="CHEBI:57945"/>
    </reaction>
</comment>
<comment type="catalytic activity">
    <reaction evidence="1">
        <text>D-serine + NAD(+) + H2O = 3-hydroxypyruvate + NH4(+) + NADH + H(+)</text>
        <dbReference type="Rhea" id="RHEA:77027"/>
        <dbReference type="ChEBI" id="CHEBI:15377"/>
        <dbReference type="ChEBI" id="CHEBI:15378"/>
        <dbReference type="ChEBI" id="CHEBI:17180"/>
        <dbReference type="ChEBI" id="CHEBI:28938"/>
        <dbReference type="ChEBI" id="CHEBI:35247"/>
        <dbReference type="ChEBI" id="CHEBI:57540"/>
        <dbReference type="ChEBI" id="CHEBI:57945"/>
    </reaction>
</comment>
<comment type="catalytic activity">
    <reaction evidence="1">
        <text>methylamine + NAD(+) + H2O = formaldehyde + NH4(+) + NADH + H(+)</text>
        <dbReference type="Rhea" id="RHEA:76823"/>
        <dbReference type="ChEBI" id="CHEBI:15377"/>
        <dbReference type="ChEBI" id="CHEBI:15378"/>
        <dbReference type="ChEBI" id="CHEBI:16842"/>
        <dbReference type="ChEBI" id="CHEBI:28938"/>
        <dbReference type="ChEBI" id="CHEBI:57540"/>
        <dbReference type="ChEBI" id="CHEBI:57945"/>
        <dbReference type="ChEBI" id="CHEBI:59338"/>
    </reaction>
</comment>
<comment type="catalytic activity">
    <reaction evidence="1">
        <text>ethylamine + NAD(+) + H2O = acetaldehyde + NH4(+) + NADH + H(+)</text>
        <dbReference type="Rhea" id="RHEA:76835"/>
        <dbReference type="ChEBI" id="CHEBI:15343"/>
        <dbReference type="ChEBI" id="CHEBI:15377"/>
        <dbReference type="ChEBI" id="CHEBI:15378"/>
        <dbReference type="ChEBI" id="CHEBI:28938"/>
        <dbReference type="ChEBI" id="CHEBI:57540"/>
        <dbReference type="ChEBI" id="CHEBI:57945"/>
        <dbReference type="ChEBI" id="CHEBI:566789"/>
    </reaction>
</comment>
<comment type="catalytic activity">
    <reaction evidence="1">
        <text>propylamine + NAD(+) + H2O = propanal + NH4(+) + NADH + H(+)</text>
        <dbReference type="Rhea" id="RHEA:76839"/>
        <dbReference type="ChEBI" id="CHEBI:15377"/>
        <dbReference type="ChEBI" id="CHEBI:15378"/>
        <dbReference type="ChEBI" id="CHEBI:17153"/>
        <dbReference type="ChEBI" id="CHEBI:28938"/>
        <dbReference type="ChEBI" id="CHEBI:57540"/>
        <dbReference type="ChEBI" id="CHEBI:57945"/>
        <dbReference type="ChEBI" id="CHEBI:566825"/>
    </reaction>
</comment>
<comment type="catalytic activity">
    <reaction evidence="1">
        <text>butylamine + NAD(+) + H2O = butanal + NH4(+) + NADH + H(+)</text>
        <dbReference type="Rhea" id="RHEA:76827"/>
        <dbReference type="ChEBI" id="CHEBI:15377"/>
        <dbReference type="ChEBI" id="CHEBI:15378"/>
        <dbReference type="ChEBI" id="CHEBI:15743"/>
        <dbReference type="ChEBI" id="CHEBI:28938"/>
        <dbReference type="ChEBI" id="CHEBI:57540"/>
        <dbReference type="ChEBI" id="CHEBI:57945"/>
        <dbReference type="ChEBI" id="CHEBI:195458"/>
    </reaction>
</comment>
<comment type="catalytic activity">
    <reaction evidence="1">
        <text>hexylamine + NAD(+) + H2O = hexanal + NH4(+) + NADH + H(+)</text>
        <dbReference type="Rhea" id="RHEA:76831"/>
        <dbReference type="ChEBI" id="CHEBI:15377"/>
        <dbReference type="ChEBI" id="CHEBI:15378"/>
        <dbReference type="ChEBI" id="CHEBI:28938"/>
        <dbReference type="ChEBI" id="CHEBI:57540"/>
        <dbReference type="ChEBI" id="CHEBI:57945"/>
        <dbReference type="ChEBI" id="CHEBI:88528"/>
        <dbReference type="ChEBI" id="CHEBI:195452"/>
    </reaction>
</comment>
<comment type="catalytic activity">
    <reaction evidence="1">
        <text>octylamine + NAD(+) + H2O = octanal + NH4(+) + NADH + H(+)</text>
        <dbReference type="Rhea" id="RHEA:76843"/>
        <dbReference type="ChEBI" id="CHEBI:15377"/>
        <dbReference type="ChEBI" id="CHEBI:15378"/>
        <dbReference type="ChEBI" id="CHEBI:17935"/>
        <dbReference type="ChEBI" id="CHEBI:28938"/>
        <dbReference type="ChEBI" id="CHEBI:57540"/>
        <dbReference type="ChEBI" id="CHEBI:57945"/>
        <dbReference type="ChEBI" id="CHEBI:195453"/>
    </reaction>
</comment>
<comment type="catalytic activity">
    <reaction evidence="1">
        <text>(R)-sec-butylamine + NAD(+) + H2O = butan-2-one + NH4(+) + NADH + H(+)</text>
        <dbReference type="Rhea" id="RHEA:76847"/>
        <dbReference type="ChEBI" id="CHEBI:15377"/>
        <dbReference type="ChEBI" id="CHEBI:15378"/>
        <dbReference type="ChEBI" id="CHEBI:28398"/>
        <dbReference type="ChEBI" id="CHEBI:28938"/>
        <dbReference type="ChEBI" id="CHEBI:57540"/>
        <dbReference type="ChEBI" id="CHEBI:57945"/>
        <dbReference type="ChEBI" id="CHEBI:195455"/>
    </reaction>
</comment>
<comment type="catalytic activity">
    <reaction evidence="1">
        <text>(S)-sec-butylamine + NAD(+) + H2O = butan-2-one + NH4(+) + NADH + H(+)</text>
        <dbReference type="Rhea" id="RHEA:76851"/>
        <dbReference type="ChEBI" id="CHEBI:15377"/>
        <dbReference type="ChEBI" id="CHEBI:15378"/>
        <dbReference type="ChEBI" id="CHEBI:28398"/>
        <dbReference type="ChEBI" id="CHEBI:28938"/>
        <dbReference type="ChEBI" id="CHEBI:57540"/>
        <dbReference type="ChEBI" id="CHEBI:57945"/>
        <dbReference type="ChEBI" id="CHEBI:195454"/>
    </reaction>
</comment>
<comment type="catalytic activity">
    <reaction evidence="1">
        <text>2-aminopentane + NAD(+) + H2O = pentan-2-one + NH4(+) + NADH + H(+)</text>
        <dbReference type="Rhea" id="RHEA:76855"/>
        <dbReference type="ChEBI" id="CHEBI:15377"/>
        <dbReference type="ChEBI" id="CHEBI:15378"/>
        <dbReference type="ChEBI" id="CHEBI:16472"/>
        <dbReference type="ChEBI" id="CHEBI:28938"/>
        <dbReference type="ChEBI" id="CHEBI:57540"/>
        <dbReference type="ChEBI" id="CHEBI:57945"/>
        <dbReference type="ChEBI" id="CHEBI:195456"/>
    </reaction>
</comment>
<comment type="catalytic activity">
    <reaction evidence="1">
        <text>3-aminopentane + NAD(+) + H2O = pentan-3-one + NH4(+) + NADH + H(+)</text>
        <dbReference type="Rhea" id="RHEA:76859"/>
        <dbReference type="ChEBI" id="CHEBI:15377"/>
        <dbReference type="ChEBI" id="CHEBI:15378"/>
        <dbReference type="ChEBI" id="CHEBI:28938"/>
        <dbReference type="ChEBI" id="CHEBI:57540"/>
        <dbReference type="ChEBI" id="CHEBI:57945"/>
        <dbReference type="ChEBI" id="CHEBI:87755"/>
        <dbReference type="ChEBI" id="CHEBI:195457"/>
    </reaction>
</comment>
<comment type="catalytic activity">
    <reaction evidence="1">
        <text>(2R)-heptan-2-amine + NAD(+) + H2O = heptan-2-one + NH4(+) + NADH + H(+)</text>
        <dbReference type="Rhea" id="RHEA:77031"/>
        <dbReference type="ChEBI" id="CHEBI:5672"/>
        <dbReference type="ChEBI" id="CHEBI:15377"/>
        <dbReference type="ChEBI" id="CHEBI:15378"/>
        <dbReference type="ChEBI" id="CHEBI:28938"/>
        <dbReference type="ChEBI" id="CHEBI:57540"/>
        <dbReference type="ChEBI" id="CHEBI:57945"/>
        <dbReference type="ChEBI" id="CHEBI:195503"/>
    </reaction>
</comment>
<comment type="catalytic activity">
    <reaction evidence="1">
        <text>(2S)-heptan-2-amine + NAD(+) + H2O = heptan-2-one + NH4(+) + NADH + H(+)</text>
        <dbReference type="Rhea" id="RHEA:77035"/>
        <dbReference type="ChEBI" id="CHEBI:5672"/>
        <dbReference type="ChEBI" id="CHEBI:15377"/>
        <dbReference type="ChEBI" id="CHEBI:15378"/>
        <dbReference type="ChEBI" id="CHEBI:28938"/>
        <dbReference type="ChEBI" id="CHEBI:57540"/>
        <dbReference type="ChEBI" id="CHEBI:57945"/>
        <dbReference type="ChEBI" id="CHEBI:195504"/>
    </reaction>
</comment>
<comment type="catalytic activity">
    <reaction evidence="1">
        <text>benzylamine + NAD(+) + H2O = benzaldehyde + NH4(+) + NADH + H(+)</text>
        <dbReference type="Rhea" id="RHEA:76863"/>
        <dbReference type="ChEBI" id="CHEBI:15377"/>
        <dbReference type="ChEBI" id="CHEBI:15378"/>
        <dbReference type="ChEBI" id="CHEBI:17169"/>
        <dbReference type="ChEBI" id="CHEBI:28938"/>
        <dbReference type="ChEBI" id="CHEBI:57540"/>
        <dbReference type="ChEBI" id="CHEBI:57945"/>
        <dbReference type="ChEBI" id="CHEBI:225238"/>
    </reaction>
</comment>
<comment type="catalytic activity">
    <reaction evidence="1">
        <text>3-aminobutan-2-ol + NAD(+) + H2O = acetoin + NH4(+) + NADH + H(+)</text>
        <dbReference type="Rhea" id="RHEA:76879"/>
        <dbReference type="ChEBI" id="CHEBI:15377"/>
        <dbReference type="ChEBI" id="CHEBI:15378"/>
        <dbReference type="ChEBI" id="CHEBI:15688"/>
        <dbReference type="ChEBI" id="CHEBI:28938"/>
        <dbReference type="ChEBI" id="CHEBI:57540"/>
        <dbReference type="ChEBI" id="CHEBI:57945"/>
        <dbReference type="ChEBI" id="CHEBI:195440"/>
    </reaction>
</comment>
<comment type="catalytic activity">
    <reaction evidence="1">
        <text>3-aminobutan-1-ol + NAD(+) + H2O = 4-hydroxybutan-2-one + NH4(+) + NADH + H(+)</text>
        <dbReference type="Rhea" id="RHEA:76883"/>
        <dbReference type="ChEBI" id="CHEBI:15377"/>
        <dbReference type="ChEBI" id="CHEBI:15378"/>
        <dbReference type="ChEBI" id="CHEBI:28938"/>
        <dbReference type="ChEBI" id="CHEBI:41268"/>
        <dbReference type="ChEBI" id="CHEBI:57540"/>
        <dbReference type="ChEBI" id="CHEBI:57945"/>
        <dbReference type="ChEBI" id="CHEBI:195441"/>
    </reaction>
</comment>
<comment type="catalytic activity">
    <reaction evidence="1">
        <text>5-hydroxypentan-2-amine + NAD(+) + H2O = 5-hydroxypentan-2-one + NH4(+) + NADH + H(+)</text>
        <dbReference type="Rhea" id="RHEA:76887"/>
        <dbReference type="ChEBI" id="CHEBI:15377"/>
        <dbReference type="ChEBI" id="CHEBI:15378"/>
        <dbReference type="ChEBI" id="CHEBI:28938"/>
        <dbReference type="ChEBI" id="CHEBI:57540"/>
        <dbReference type="ChEBI" id="CHEBI:57945"/>
        <dbReference type="ChEBI" id="CHEBI:195472"/>
        <dbReference type="ChEBI" id="CHEBI:195473"/>
    </reaction>
</comment>
<comment type="catalytic activity">
    <reaction evidence="1">
        <text>4-hydroxyhexan-3-amine + NAD(+) + H2O = 4-hydroxyhexan-3-one + NH4(+) + NADH + H(+)</text>
        <dbReference type="Rhea" id="RHEA:77039"/>
        <dbReference type="ChEBI" id="CHEBI:15377"/>
        <dbReference type="ChEBI" id="CHEBI:15378"/>
        <dbReference type="ChEBI" id="CHEBI:18351"/>
        <dbReference type="ChEBI" id="CHEBI:28938"/>
        <dbReference type="ChEBI" id="CHEBI:57540"/>
        <dbReference type="ChEBI" id="CHEBI:57945"/>
        <dbReference type="ChEBI" id="CHEBI:195505"/>
    </reaction>
</comment>
<comment type="catalytic activity">
    <reaction evidence="1">
        <text>5-hydroxyoctan-4-amine + NAD(+) + H2O = 5-hydroxyoctan-4-one + NH4(+) + NADH + H(+)</text>
        <dbReference type="Rhea" id="RHEA:77043"/>
        <dbReference type="ChEBI" id="CHEBI:15377"/>
        <dbReference type="ChEBI" id="CHEBI:15378"/>
        <dbReference type="ChEBI" id="CHEBI:28938"/>
        <dbReference type="ChEBI" id="CHEBI:57540"/>
        <dbReference type="ChEBI" id="CHEBI:57945"/>
        <dbReference type="ChEBI" id="CHEBI:179933"/>
        <dbReference type="ChEBI" id="CHEBI:195506"/>
    </reaction>
</comment>
<comment type="catalytic activity">
    <reaction evidence="1">
        <text>2-hydroxy-1-phenylethan-1-amine + NAD(+) + H2O = 2-hydroxyacetophenone + NH4(+) + NADH + H(+)</text>
        <dbReference type="Rhea" id="RHEA:76891"/>
        <dbReference type="ChEBI" id="CHEBI:15377"/>
        <dbReference type="ChEBI" id="CHEBI:15378"/>
        <dbReference type="ChEBI" id="CHEBI:28341"/>
        <dbReference type="ChEBI" id="CHEBI:28938"/>
        <dbReference type="ChEBI" id="CHEBI:57540"/>
        <dbReference type="ChEBI" id="CHEBI:57945"/>
        <dbReference type="ChEBI" id="CHEBI:195474"/>
    </reaction>
</comment>
<comment type="catalytic activity">
    <reaction evidence="1">
        <text>hexan-2-amine + NAD(+) + H2O = hexan-2-one + NH4(+) + NADH + H(+)</text>
        <dbReference type="Rhea" id="RHEA:76875"/>
        <dbReference type="ChEBI" id="CHEBI:15377"/>
        <dbReference type="ChEBI" id="CHEBI:15378"/>
        <dbReference type="ChEBI" id="CHEBI:28938"/>
        <dbReference type="ChEBI" id="CHEBI:57540"/>
        <dbReference type="ChEBI" id="CHEBI:57945"/>
        <dbReference type="ChEBI" id="CHEBI:89206"/>
        <dbReference type="ChEBI" id="CHEBI:195475"/>
    </reaction>
</comment>
<comment type="catalytic activity">
    <reaction evidence="1">
        <text>4-phenylbutan-2-amine + NAD(+) + H2O = 4-phenylbutan-2-one + NH4(+) + NADH + H(+)</text>
        <dbReference type="Rhea" id="RHEA:77047"/>
        <dbReference type="ChEBI" id="CHEBI:15377"/>
        <dbReference type="ChEBI" id="CHEBI:15378"/>
        <dbReference type="ChEBI" id="CHEBI:28938"/>
        <dbReference type="ChEBI" id="CHEBI:57540"/>
        <dbReference type="ChEBI" id="CHEBI:57945"/>
        <dbReference type="ChEBI" id="CHEBI:195507"/>
        <dbReference type="ChEBI" id="CHEBI:195508"/>
    </reaction>
</comment>
<comment type="biophysicochemical properties">
    <kinetics>
        <KM evidence="1">4 mM for serinol</KM>
        <KM evidence="1">0.84 mM for NAD(+)</KM>
        <KM evidence="1">2.2 mM for dihydroxyacetone</KM>
        <KM evidence="1">0.022 mM for NADH</KM>
        <KM evidence="1">26.5 mM for NH4(+)</KM>
    </kinetics>
    <phDependence>
        <text evidence="1">Optimum pH is 10.0 for the oxidative deamination reaction, while the optimum pH of the reductive amination reaction is rather broad and between 6.5 and 7.0.</text>
    </phDependence>
    <temperatureDependence>
        <text evidence="1">Optimum temperature is 30 degrees Celsius for the deaminating reaction. Is not thermostable.</text>
    </temperatureDependence>
</comment>
<comment type="subunit">
    <text evidence="1">Homodimer.</text>
</comment>
<comment type="similarity">
    <text evidence="3">Belongs to the amine dehydrogenase family.</text>
</comment>
<organism>
    <name type="scientific">Streptomyces virginiae</name>
    <name type="common">Streptomyces cinnamonensis</name>
    <dbReference type="NCBI Taxonomy" id="1961"/>
    <lineage>
        <taxon>Bacteria</taxon>
        <taxon>Bacillati</taxon>
        <taxon>Actinomycetota</taxon>
        <taxon>Actinomycetes</taxon>
        <taxon>Kitasatosporales</taxon>
        <taxon>Streptomycetaceae</taxon>
        <taxon>Streptomyces</taxon>
    </lineage>
</organism>
<feature type="chain" id="PRO_0000459100" description="Amine dehydrogenase">
    <location>
        <begin position="1"/>
        <end position="360"/>
    </location>
</feature>
<evidence type="ECO:0000269" key="1">
    <source ref="2"/>
</evidence>
<evidence type="ECO:0000303" key="2">
    <source ref="2"/>
</evidence>
<evidence type="ECO:0000305" key="3"/>
<evidence type="ECO:0000312" key="4">
    <source>
        <dbReference type="EMBL" id="KOG45764.1"/>
    </source>
</evidence>
<evidence type="ECO:0000312" key="5">
    <source>
        <dbReference type="Proteomes" id="UP000037084"/>
    </source>
</evidence>
<dbReference type="EC" id="1.4.1.28" evidence="1"/>
<dbReference type="EMBL" id="LGUV01000359">
    <property type="protein sequence ID" value="KOG45764.1"/>
    <property type="molecule type" value="Genomic_DNA"/>
</dbReference>
<dbReference type="RefSeq" id="WP_053175822.1">
    <property type="nucleotide sequence ID" value="NZ_LGUV01000359.1"/>
</dbReference>
<dbReference type="SMR" id="A0A0L8M630"/>
<dbReference type="PATRIC" id="fig|1961.12.peg.6542"/>
<dbReference type="eggNOG" id="COG3804">
    <property type="taxonomic scope" value="Bacteria"/>
</dbReference>
<dbReference type="OrthoDB" id="4759936at2"/>
<dbReference type="Proteomes" id="UP000037084">
    <property type="component" value="Unassembled WGS sequence"/>
</dbReference>
<dbReference type="GO" id="GO:0008839">
    <property type="term" value="F:4-hydroxy-tetrahydrodipicolinate reductase"/>
    <property type="evidence" value="ECO:0007669"/>
    <property type="project" value="InterPro"/>
</dbReference>
<dbReference type="GO" id="GO:0009089">
    <property type="term" value="P:lysine biosynthetic process via diaminopimelate"/>
    <property type="evidence" value="ECO:0007669"/>
    <property type="project" value="InterPro"/>
</dbReference>
<dbReference type="CDD" id="cd24146">
    <property type="entry name" value="nat-AmDH_N_like"/>
    <property type="match status" value="1"/>
</dbReference>
<dbReference type="Gene3D" id="3.40.50.720">
    <property type="entry name" value="NAD(P)-binding Rossmann-like Domain"/>
    <property type="match status" value="1"/>
</dbReference>
<dbReference type="InterPro" id="IPR045760">
    <property type="entry name" value="DAP_DH_C"/>
</dbReference>
<dbReference type="InterPro" id="IPR000846">
    <property type="entry name" value="DapB_N"/>
</dbReference>
<dbReference type="InterPro" id="IPR036291">
    <property type="entry name" value="NAD(P)-bd_dom_sf"/>
</dbReference>
<dbReference type="Pfam" id="PF19328">
    <property type="entry name" value="DAP_DH_C"/>
    <property type="match status" value="1"/>
</dbReference>
<dbReference type="Pfam" id="PF01113">
    <property type="entry name" value="DapB_N"/>
    <property type="match status" value="1"/>
</dbReference>
<dbReference type="SUPFAM" id="SSF51735">
    <property type="entry name" value="NAD(P)-binding Rossmann-fold domains"/>
    <property type="match status" value="1"/>
</dbReference>
<sequence>MISTVVWGTGNVGRLAIRAVEAHPALQLCAVIVHNPAKVGRDAGELGELDRLLGVEATDDIEAVLAARPRAVVYAASGDVRPDEALADITRAVRSGAVVVSPALYPLYDHRNAPPEFRDPVLAAVTEGGGSLFASGVDPGWGNDVLPLLLSGLGTTIDVIRCQEIFDYSTYDQPDSVRYLVGMGQPMDYEPMMLMPSIPTMVWGGQIRMMARALGVELDEIRETSDRRALDTTVTTRTMGEFGAGTQGAIRFEVQGIVEGEPRIVIEHVTRIHPSCAPDWPVPPDGGDGAHRVVIEGRPRIEVTIEATDEGENRSAGGNATAVGRLVGAIDWLVEAEPGLYDALDIPLRPAIGRLGRKQS</sequence>
<name>AMDH_STRVG</name>
<protein>
    <recommendedName>
        <fullName evidence="2">Amine dehydrogenase</fullName>
        <shortName evidence="2">AMDH</shortName>
        <ecNumber evidence="1">1.4.1.28</ecNumber>
    </recommendedName>
    <alternativeName>
        <fullName evidence="3">Secondary-alkyl amine dehydrogenase</fullName>
    </alternativeName>
</protein>
<keyword id="KW-0520">NAD</keyword>
<keyword id="KW-0521">NADP</keyword>
<keyword id="KW-0560">Oxidoreductase</keyword>
<reference evidence="5" key="1">
    <citation type="submission" date="2015-07" db="EMBL/GenBank/DDBJ databases">
        <authorList>
            <person name="Ju K.-S."/>
            <person name="Doroghazi J.R."/>
            <person name="Metcalf W.W."/>
        </authorList>
    </citation>
    <scope>NUCLEOTIDE SEQUENCE [LARGE SCALE GENOMIC DNA]</scope>
    <source>
        <strain>NRRL B-1447</strain>
    </source>
</reference>
<reference key="2">
    <citation type="journal article" date="2000" name="J. Mol. Catal., B Enzym.">
        <title>Determining a novel NAD+-dependent amine dehydrogenase with a broad substrate range from Streptomyces virginiae IFO 12827: purification and characterization.</title>
        <authorList>
            <person name="Itoh N."/>
            <person name="Yachi C."/>
            <person name="Kudome T."/>
        </authorList>
    </citation>
    <scope>FUNCTION</scope>
    <scope>CATALYTIC ACTIVITY</scope>
    <scope>BIOPHYSICOCHEMICAL PROPERTIES</scope>
    <scope>SUBSTRATE SPECIFICITY</scope>
    <scope>SUBUNIT</scope>
    <source>
        <strain>ATCC 19817 / DSM 40094 / JCM 4425 / KCTC 1747 / NBRC 12827 / NRRL B-1446 / NA 255-88</strain>
    </source>
</reference>
<accession>A0A0L8M630</accession>
<proteinExistence type="evidence at protein level"/>